<dbReference type="EMBL" id="CP000705">
    <property type="protein sequence ID" value="ABQ82655.1"/>
    <property type="status" value="ALT_INIT"/>
    <property type="molecule type" value="Genomic_DNA"/>
</dbReference>
<dbReference type="RefSeq" id="WP_012390509.1">
    <property type="nucleotide sequence ID" value="NC_009513.1"/>
</dbReference>
<dbReference type="SMR" id="A5VII1"/>
<dbReference type="STRING" id="557436.Lreu_0386"/>
<dbReference type="KEGG" id="lre:Lreu_0386"/>
<dbReference type="eggNOG" id="COG1660">
    <property type="taxonomic scope" value="Bacteria"/>
</dbReference>
<dbReference type="HOGENOM" id="CLU_059558_0_0_9"/>
<dbReference type="OMA" id="GFKHGVP"/>
<dbReference type="Proteomes" id="UP000001991">
    <property type="component" value="Chromosome"/>
</dbReference>
<dbReference type="GO" id="GO:0005524">
    <property type="term" value="F:ATP binding"/>
    <property type="evidence" value="ECO:0007669"/>
    <property type="project" value="UniProtKB-UniRule"/>
</dbReference>
<dbReference type="GO" id="GO:0005525">
    <property type="term" value="F:GTP binding"/>
    <property type="evidence" value="ECO:0007669"/>
    <property type="project" value="UniProtKB-UniRule"/>
</dbReference>
<dbReference type="Gene3D" id="3.40.50.300">
    <property type="entry name" value="P-loop containing nucleotide triphosphate hydrolases"/>
    <property type="match status" value="1"/>
</dbReference>
<dbReference type="HAMAP" id="MF_00636">
    <property type="entry name" value="RapZ_like"/>
    <property type="match status" value="1"/>
</dbReference>
<dbReference type="InterPro" id="IPR027417">
    <property type="entry name" value="P-loop_NTPase"/>
</dbReference>
<dbReference type="InterPro" id="IPR005337">
    <property type="entry name" value="RapZ-like"/>
</dbReference>
<dbReference type="InterPro" id="IPR053930">
    <property type="entry name" value="RapZ-like_N"/>
</dbReference>
<dbReference type="InterPro" id="IPR053931">
    <property type="entry name" value="RapZ_C"/>
</dbReference>
<dbReference type="NCBIfam" id="NF003828">
    <property type="entry name" value="PRK05416.1"/>
    <property type="match status" value="1"/>
</dbReference>
<dbReference type="PANTHER" id="PTHR30448">
    <property type="entry name" value="RNASE ADAPTER PROTEIN RAPZ"/>
    <property type="match status" value="1"/>
</dbReference>
<dbReference type="PANTHER" id="PTHR30448:SF0">
    <property type="entry name" value="RNASE ADAPTER PROTEIN RAPZ"/>
    <property type="match status" value="1"/>
</dbReference>
<dbReference type="Pfam" id="PF22740">
    <property type="entry name" value="PapZ_C"/>
    <property type="match status" value="1"/>
</dbReference>
<dbReference type="Pfam" id="PF03668">
    <property type="entry name" value="RapZ-like_N"/>
    <property type="match status" value="1"/>
</dbReference>
<dbReference type="PIRSF" id="PIRSF005052">
    <property type="entry name" value="P-loopkin"/>
    <property type="match status" value="1"/>
</dbReference>
<dbReference type="SUPFAM" id="SSF52540">
    <property type="entry name" value="P-loop containing nucleoside triphosphate hydrolases"/>
    <property type="match status" value="1"/>
</dbReference>
<name>Y386_LIMRD</name>
<gene>
    <name type="ordered locus">Lreu_0386</name>
</gene>
<accession>A5VII1</accession>
<organism>
    <name type="scientific">Limosilactobacillus reuteri (strain DSM 20016)</name>
    <name type="common">Lactobacillus reuteri</name>
    <dbReference type="NCBI Taxonomy" id="557436"/>
    <lineage>
        <taxon>Bacteria</taxon>
        <taxon>Bacillati</taxon>
        <taxon>Bacillota</taxon>
        <taxon>Bacilli</taxon>
        <taxon>Lactobacillales</taxon>
        <taxon>Lactobacillaceae</taxon>
        <taxon>Limosilactobacillus</taxon>
    </lineage>
</organism>
<feature type="chain" id="PRO_0000383256" description="Nucleotide-binding protein Lreu_0386">
    <location>
        <begin position="1"/>
        <end position="290"/>
    </location>
</feature>
<feature type="binding site" evidence="1">
    <location>
        <begin position="13"/>
        <end position="20"/>
    </location>
    <ligand>
        <name>ATP</name>
        <dbReference type="ChEBI" id="CHEBI:30616"/>
    </ligand>
</feature>
<feature type="binding site" evidence="1">
    <location>
        <begin position="63"/>
        <end position="66"/>
    </location>
    <ligand>
        <name>GTP</name>
        <dbReference type="ChEBI" id="CHEBI:37565"/>
    </ligand>
</feature>
<evidence type="ECO:0000255" key="1">
    <source>
        <dbReference type="HAMAP-Rule" id="MF_00636"/>
    </source>
</evidence>
<evidence type="ECO:0000305" key="2"/>
<protein>
    <recommendedName>
        <fullName evidence="1">Nucleotide-binding protein Lreu_0386</fullName>
    </recommendedName>
</protein>
<proteinExistence type="inferred from homology"/>
<keyword id="KW-0067">ATP-binding</keyword>
<keyword id="KW-0342">GTP-binding</keyword>
<keyword id="KW-0547">Nucleotide-binding</keyword>
<keyword id="KW-1185">Reference proteome</keyword>
<sequence>MVDKKLKVVIITGMSGAGKTVAVHSLEDLGYFVIDNMLPGLAERFVDVIEDSREFDKIAMVMDMRSRGFYDEVLPNFEKLKKRADLDVKLLFLDANDVTLISRYKETRRSHPLSPQGRILDGVELERKLSTDLKSQADIVIDTTNVTPRNLKLRLNKLFGHGEGNDFYVEVMSFGFKYGLPLDADIVMDVRFLPNPFYIPELKHLTGNDPAVQNYVMQSPLAKEFYQHLRSLLEIALPGYIKEGKSSLTIAIGCTGGQHRSVTIANKLSADLKEKGYKVNTYHRDIEKAK</sequence>
<reference key="1">
    <citation type="journal article" date="2011" name="PLoS Genet.">
        <title>The evolution of host specialization in the vertebrate gut symbiont Lactobacillus reuteri.</title>
        <authorList>
            <person name="Frese S.A."/>
            <person name="Benson A.K."/>
            <person name="Tannock G.W."/>
            <person name="Loach D.M."/>
            <person name="Kim J."/>
            <person name="Zhang M."/>
            <person name="Oh P.L."/>
            <person name="Heng N.C."/>
            <person name="Patil P.B."/>
            <person name="Juge N."/>
            <person name="Mackenzie D.A."/>
            <person name="Pearson B.M."/>
            <person name="Lapidus A."/>
            <person name="Dalin E."/>
            <person name="Tice H."/>
            <person name="Goltsman E."/>
            <person name="Land M."/>
            <person name="Hauser L."/>
            <person name="Ivanova N."/>
            <person name="Kyrpides N.C."/>
            <person name="Walter J."/>
        </authorList>
    </citation>
    <scope>NUCLEOTIDE SEQUENCE [LARGE SCALE GENOMIC DNA]</scope>
    <source>
        <strain>DSM 20016</strain>
    </source>
</reference>
<comment type="function">
    <text evidence="1">Displays ATPase and GTPase activities.</text>
</comment>
<comment type="similarity">
    <text evidence="1">Belongs to the RapZ-like family.</text>
</comment>
<comment type="sequence caution" evidence="2">
    <conflict type="erroneous initiation">
        <sequence resource="EMBL-CDS" id="ABQ82655"/>
    </conflict>
</comment>